<protein>
    <recommendedName>
        <fullName evidence="1">Ecotin</fullName>
    </recommendedName>
</protein>
<accession>B1JSA0</accession>
<gene>
    <name evidence="1" type="primary">eco</name>
    <name type="ordered locus">YPK_2851</name>
</gene>
<name>ECOT_YERPY</name>
<keyword id="KW-0002">3D-structure</keyword>
<keyword id="KW-1015">Disulfide bond</keyword>
<keyword id="KW-0574">Periplasm</keyword>
<keyword id="KW-0646">Protease inhibitor</keyword>
<keyword id="KW-0722">Serine protease inhibitor</keyword>
<keyword id="KW-0732">Signal</keyword>
<feature type="signal peptide" evidence="1">
    <location>
        <begin position="1"/>
        <end position="21"/>
    </location>
</feature>
<feature type="chain" id="PRO_5000316227" description="Ecotin">
    <location>
        <begin position="22"/>
        <end position="169"/>
    </location>
</feature>
<feature type="site" description="Reactive bond" evidence="1">
    <location>
        <begin position="110"/>
        <end position="111"/>
    </location>
</feature>
<feature type="disulfide bond" evidence="1">
    <location>
        <begin position="76"/>
        <end position="113"/>
    </location>
</feature>
<feature type="helix" evidence="2">
    <location>
        <begin position="33"/>
        <end position="35"/>
    </location>
</feature>
<feature type="strand" evidence="2">
    <location>
        <begin position="44"/>
        <end position="51"/>
    </location>
</feature>
<feature type="helix" evidence="2">
    <location>
        <begin position="59"/>
        <end position="61"/>
    </location>
</feature>
<feature type="strand" evidence="2">
    <location>
        <begin position="62"/>
        <end position="74"/>
    </location>
</feature>
<feature type="strand" evidence="2">
    <location>
        <begin position="79"/>
        <end position="82"/>
    </location>
</feature>
<feature type="strand" evidence="2">
    <location>
        <begin position="85"/>
        <end position="89"/>
    </location>
</feature>
<feature type="turn" evidence="2">
    <location>
        <begin position="91"/>
        <end position="93"/>
    </location>
</feature>
<feature type="strand" evidence="2">
    <location>
        <begin position="96"/>
        <end position="100"/>
    </location>
</feature>
<feature type="strand" evidence="2">
    <location>
        <begin position="107"/>
        <end position="109"/>
    </location>
</feature>
<feature type="strand" evidence="2">
    <location>
        <begin position="120"/>
        <end position="127"/>
    </location>
</feature>
<feature type="turn" evidence="2">
    <location>
        <begin position="129"/>
        <end position="132"/>
    </location>
</feature>
<feature type="strand" evidence="2">
    <location>
        <begin position="133"/>
        <end position="135"/>
    </location>
</feature>
<feature type="strand" evidence="2">
    <location>
        <begin position="142"/>
        <end position="147"/>
    </location>
</feature>
<feature type="strand" evidence="2">
    <location>
        <begin position="151"/>
        <end position="159"/>
    </location>
</feature>
<organism>
    <name type="scientific">Yersinia pseudotuberculosis serotype O:3 (strain YPIII)</name>
    <dbReference type="NCBI Taxonomy" id="502800"/>
    <lineage>
        <taxon>Bacteria</taxon>
        <taxon>Pseudomonadati</taxon>
        <taxon>Pseudomonadota</taxon>
        <taxon>Gammaproteobacteria</taxon>
        <taxon>Enterobacterales</taxon>
        <taxon>Yersiniaceae</taxon>
        <taxon>Yersinia</taxon>
    </lineage>
</organism>
<evidence type="ECO:0000255" key="1">
    <source>
        <dbReference type="HAMAP-Rule" id="MF_00706"/>
    </source>
</evidence>
<evidence type="ECO:0007829" key="2">
    <source>
        <dbReference type="PDB" id="2Y6T"/>
    </source>
</evidence>
<reference key="1">
    <citation type="submission" date="2008-02" db="EMBL/GenBank/DDBJ databases">
        <title>Complete sequence of Yersinia pseudotuberculosis YPIII.</title>
        <authorList>
            <consortium name="US DOE Joint Genome Institute"/>
            <person name="Copeland A."/>
            <person name="Lucas S."/>
            <person name="Lapidus A."/>
            <person name="Glavina del Rio T."/>
            <person name="Dalin E."/>
            <person name="Tice H."/>
            <person name="Bruce D."/>
            <person name="Goodwin L."/>
            <person name="Pitluck S."/>
            <person name="Munk A.C."/>
            <person name="Brettin T."/>
            <person name="Detter J.C."/>
            <person name="Han C."/>
            <person name="Tapia R."/>
            <person name="Schmutz J."/>
            <person name="Larimer F."/>
            <person name="Land M."/>
            <person name="Hauser L."/>
            <person name="Challacombe J.F."/>
            <person name="Green L."/>
            <person name="Lindler L.E."/>
            <person name="Nikolich M.P."/>
            <person name="Richardson P."/>
        </authorList>
    </citation>
    <scope>NUCLEOTIDE SEQUENCE [LARGE SCALE GENOMIC DNA]</scope>
    <source>
        <strain>YPIII</strain>
    </source>
</reference>
<dbReference type="EMBL" id="CP000950">
    <property type="protein sequence ID" value="ACA69127.1"/>
    <property type="molecule type" value="Genomic_DNA"/>
</dbReference>
<dbReference type="RefSeq" id="WP_002210815.1">
    <property type="nucleotide sequence ID" value="NZ_CP009792.1"/>
</dbReference>
<dbReference type="PDB" id="2Y6T">
    <property type="method" value="X-ray"/>
    <property type="resolution" value="2.74 A"/>
    <property type="chains" value="E/F/G/H=22-169"/>
</dbReference>
<dbReference type="PDBsum" id="2Y6T"/>
<dbReference type="SMR" id="B1JSA0"/>
<dbReference type="MEROPS" id="I11.001"/>
<dbReference type="GeneID" id="57977350"/>
<dbReference type="KEGG" id="ypy:YPK_2851"/>
<dbReference type="PATRIC" id="fig|502800.11.peg.3566"/>
<dbReference type="EvolutionaryTrace" id="B1JSA0"/>
<dbReference type="GO" id="GO:0042597">
    <property type="term" value="C:periplasmic space"/>
    <property type="evidence" value="ECO:0007669"/>
    <property type="project" value="UniProtKB-SubCell"/>
</dbReference>
<dbReference type="GO" id="GO:0004867">
    <property type="term" value="F:serine-type endopeptidase inhibitor activity"/>
    <property type="evidence" value="ECO:0007669"/>
    <property type="project" value="UniProtKB-UniRule"/>
</dbReference>
<dbReference type="CDD" id="cd00242">
    <property type="entry name" value="Ecotin"/>
    <property type="match status" value="1"/>
</dbReference>
<dbReference type="Gene3D" id="2.60.40.550">
    <property type="entry name" value="Ecotin"/>
    <property type="match status" value="1"/>
</dbReference>
<dbReference type="HAMAP" id="MF_00706">
    <property type="entry name" value="Ecotin"/>
    <property type="match status" value="1"/>
</dbReference>
<dbReference type="InterPro" id="IPR036198">
    <property type="entry name" value="Ecotin_sf"/>
</dbReference>
<dbReference type="InterPro" id="IPR005658">
    <property type="entry name" value="Prot_inh_ecotin"/>
</dbReference>
<dbReference type="InterPro" id="IPR023084">
    <property type="entry name" value="Prot_inh_ecotin_gammaproteobac"/>
</dbReference>
<dbReference type="NCBIfam" id="NF002987">
    <property type="entry name" value="PRK03719.1"/>
    <property type="match status" value="1"/>
</dbReference>
<dbReference type="PANTHER" id="PTHR35890">
    <property type="match status" value="1"/>
</dbReference>
<dbReference type="PANTHER" id="PTHR35890:SF3">
    <property type="entry name" value="ECOTIN"/>
    <property type="match status" value="1"/>
</dbReference>
<dbReference type="Pfam" id="PF03974">
    <property type="entry name" value="Ecotin"/>
    <property type="match status" value="1"/>
</dbReference>
<dbReference type="PIRSF" id="PIRSF006865">
    <property type="entry name" value="Prot_inh_ecotin"/>
    <property type="match status" value="1"/>
</dbReference>
<dbReference type="SUPFAM" id="SSF49772">
    <property type="entry name" value="Ecotin, trypsin inhibitor"/>
    <property type="match status" value="1"/>
</dbReference>
<comment type="function">
    <text evidence="1">General inhibitor of pancreatic serine proteases: inhibits chymotrypsin, trypsin, elastases, factor X, kallikrein as well as a variety of other proteases.</text>
</comment>
<comment type="subunit">
    <text evidence="1">Homodimer.</text>
</comment>
<comment type="subcellular location">
    <subcellularLocation>
        <location evidence="1">Periplasm</location>
    </subcellularLocation>
</comment>
<comment type="similarity">
    <text evidence="1">Belongs to the protease inhibitor I11 (ecotin) family.</text>
</comment>
<sequence length="169" mass="18871">MKKCSIILASVLLATSINAIADTPTPLNQQQPLEKIAPYPQAEKGMSRQVIFLEPQKDESRFKVELLIGKTLNVDCNRHMLGGNLETRTLSGWGFDYLVMDKISQPASTMMACPEDSKPQVKFVTANLGDAAMQRYNSRLPIVVYVPQGVEVKYRIWEAGEDIRSAQVK</sequence>
<proteinExistence type="evidence at protein level"/>